<dbReference type="EMBL" id="CP000776">
    <property type="protein sequence ID" value="ABS52546.1"/>
    <property type="molecule type" value="Genomic_DNA"/>
</dbReference>
<dbReference type="RefSeq" id="WP_011991558.1">
    <property type="nucleotide sequence ID" value="NC_009714.1"/>
</dbReference>
<dbReference type="SMR" id="A7HZM0"/>
<dbReference type="STRING" id="360107.CHAB381_0098"/>
<dbReference type="KEGG" id="cha:CHAB381_0098"/>
<dbReference type="eggNOG" id="COG0096">
    <property type="taxonomic scope" value="Bacteria"/>
</dbReference>
<dbReference type="HOGENOM" id="CLU_098428_0_2_7"/>
<dbReference type="OrthoDB" id="9802617at2"/>
<dbReference type="Proteomes" id="UP000002407">
    <property type="component" value="Chromosome"/>
</dbReference>
<dbReference type="GO" id="GO:1990904">
    <property type="term" value="C:ribonucleoprotein complex"/>
    <property type="evidence" value="ECO:0007669"/>
    <property type="project" value="UniProtKB-KW"/>
</dbReference>
<dbReference type="GO" id="GO:0005840">
    <property type="term" value="C:ribosome"/>
    <property type="evidence" value="ECO:0007669"/>
    <property type="project" value="UniProtKB-KW"/>
</dbReference>
<dbReference type="GO" id="GO:0019843">
    <property type="term" value="F:rRNA binding"/>
    <property type="evidence" value="ECO:0007669"/>
    <property type="project" value="UniProtKB-UniRule"/>
</dbReference>
<dbReference type="GO" id="GO:0003735">
    <property type="term" value="F:structural constituent of ribosome"/>
    <property type="evidence" value="ECO:0007669"/>
    <property type="project" value="InterPro"/>
</dbReference>
<dbReference type="GO" id="GO:0006412">
    <property type="term" value="P:translation"/>
    <property type="evidence" value="ECO:0007669"/>
    <property type="project" value="UniProtKB-UniRule"/>
</dbReference>
<dbReference type="FunFam" id="3.30.1370.30:FF:000002">
    <property type="entry name" value="30S ribosomal protein S8"/>
    <property type="match status" value="1"/>
</dbReference>
<dbReference type="FunFam" id="3.30.1490.10:FF:000001">
    <property type="entry name" value="30S ribosomal protein S8"/>
    <property type="match status" value="1"/>
</dbReference>
<dbReference type="Gene3D" id="3.30.1370.30">
    <property type="match status" value="1"/>
</dbReference>
<dbReference type="Gene3D" id="3.30.1490.10">
    <property type="match status" value="1"/>
</dbReference>
<dbReference type="HAMAP" id="MF_01302_B">
    <property type="entry name" value="Ribosomal_uS8_B"/>
    <property type="match status" value="1"/>
</dbReference>
<dbReference type="InterPro" id="IPR000630">
    <property type="entry name" value="Ribosomal_uS8"/>
</dbReference>
<dbReference type="InterPro" id="IPR035987">
    <property type="entry name" value="Ribosomal_uS8_sf"/>
</dbReference>
<dbReference type="NCBIfam" id="NF001109">
    <property type="entry name" value="PRK00136.1"/>
    <property type="match status" value="1"/>
</dbReference>
<dbReference type="PANTHER" id="PTHR11758">
    <property type="entry name" value="40S RIBOSOMAL PROTEIN S15A"/>
    <property type="match status" value="1"/>
</dbReference>
<dbReference type="Pfam" id="PF00410">
    <property type="entry name" value="Ribosomal_S8"/>
    <property type="match status" value="1"/>
</dbReference>
<dbReference type="SUPFAM" id="SSF56047">
    <property type="entry name" value="Ribosomal protein S8"/>
    <property type="match status" value="1"/>
</dbReference>
<sequence length="131" mass="14648">MLNDLISDGLTRIRNASMRRLDTTKLLHSNVVESVLKILAEKGYIESYNLIEEDNKKFINVVLKYNEHGKSAINEITKISKPGRRIYQTKDEIKRFKNGYGTVIVSTSKGVMSGIEASKAGVGGEVLCTVW</sequence>
<feature type="chain" id="PRO_1000051774" description="Small ribosomal subunit protein uS8">
    <location>
        <begin position="1"/>
        <end position="131"/>
    </location>
</feature>
<keyword id="KW-1185">Reference proteome</keyword>
<keyword id="KW-0687">Ribonucleoprotein</keyword>
<keyword id="KW-0689">Ribosomal protein</keyword>
<keyword id="KW-0694">RNA-binding</keyword>
<keyword id="KW-0699">rRNA-binding</keyword>
<accession>A7HZM0</accession>
<proteinExistence type="inferred from homology"/>
<comment type="function">
    <text evidence="1">One of the primary rRNA binding proteins, it binds directly to 16S rRNA central domain where it helps coordinate assembly of the platform of the 30S subunit.</text>
</comment>
<comment type="subunit">
    <text evidence="1">Part of the 30S ribosomal subunit. Contacts proteins S5 and S12.</text>
</comment>
<comment type="similarity">
    <text evidence="1">Belongs to the universal ribosomal protein uS8 family.</text>
</comment>
<gene>
    <name evidence="1" type="primary">rpsH</name>
    <name type="ordered locus">CHAB381_0098</name>
</gene>
<protein>
    <recommendedName>
        <fullName evidence="1">Small ribosomal subunit protein uS8</fullName>
    </recommendedName>
    <alternativeName>
        <fullName evidence="2">30S ribosomal protein S8</fullName>
    </alternativeName>
</protein>
<organism>
    <name type="scientific">Campylobacter hominis (strain ATCC BAA-381 / DSM 21671 / CCUG 45161 / LMG 19568 / NCTC 13146 / CH001A)</name>
    <dbReference type="NCBI Taxonomy" id="360107"/>
    <lineage>
        <taxon>Bacteria</taxon>
        <taxon>Pseudomonadati</taxon>
        <taxon>Campylobacterota</taxon>
        <taxon>Epsilonproteobacteria</taxon>
        <taxon>Campylobacterales</taxon>
        <taxon>Campylobacteraceae</taxon>
        <taxon>Campylobacter</taxon>
    </lineage>
</organism>
<evidence type="ECO:0000255" key="1">
    <source>
        <dbReference type="HAMAP-Rule" id="MF_01302"/>
    </source>
</evidence>
<evidence type="ECO:0000305" key="2"/>
<reference key="1">
    <citation type="submission" date="2007-07" db="EMBL/GenBank/DDBJ databases">
        <title>Complete genome sequence of Campylobacter hominis ATCC BAA-381, a commensal isolated from the human gastrointestinal tract.</title>
        <authorList>
            <person name="Fouts D.E."/>
            <person name="Mongodin E.F."/>
            <person name="Puiu D."/>
            <person name="Sebastian Y."/>
            <person name="Miller W.G."/>
            <person name="Mandrell R.E."/>
            <person name="Nelson K.E."/>
        </authorList>
    </citation>
    <scope>NUCLEOTIDE SEQUENCE [LARGE SCALE GENOMIC DNA]</scope>
    <source>
        <strain>ATCC BAA-381 / DSM 21671 / CCUG 45161 / LMG 19568 / NCTC 13146 / CH001A</strain>
    </source>
</reference>
<name>RS8_CAMHC</name>